<name>EX7L_RALN1</name>
<protein>
    <recommendedName>
        <fullName evidence="1">Exodeoxyribonuclease 7 large subunit</fullName>
        <ecNumber evidence="1">3.1.11.6</ecNumber>
    </recommendedName>
    <alternativeName>
        <fullName evidence="1">Exodeoxyribonuclease VII large subunit</fullName>
        <shortName evidence="1">Exonuclease VII large subunit</shortName>
    </alternativeName>
</protein>
<comment type="function">
    <text evidence="1">Bidirectionally degrades single-stranded DNA into large acid-insoluble oligonucleotides, which are then degraded further into small acid-soluble oligonucleotides.</text>
</comment>
<comment type="catalytic activity">
    <reaction evidence="1">
        <text>Exonucleolytic cleavage in either 5'- to 3'- or 3'- to 5'-direction to yield nucleoside 5'-phosphates.</text>
        <dbReference type="EC" id="3.1.11.6"/>
    </reaction>
</comment>
<comment type="subunit">
    <text evidence="1">Heterooligomer composed of large and small subunits.</text>
</comment>
<comment type="subcellular location">
    <subcellularLocation>
        <location evidence="1">Cytoplasm</location>
    </subcellularLocation>
</comment>
<comment type="similarity">
    <text evidence="1">Belongs to the XseA family.</text>
</comment>
<sequence length="440" mass="48395">MLSVSEVNRRIAGLLERHFALGWVRGEISNFTRAGSGHWYFSLKDAGAQIRCVMFKGRNQYADFTPREGEAIEVRALVTLYEARGELQLSVEAIRRAGLGNLYEAFLRLKAALEAQGLFDAARKRPLPRHPHAIGVVTSLQAAALRDVLTTLHRRAPHVPVVVYPVPVQGAGAAERIAAMLDLVNARAEVDVIILCRGGGSIEDLWAFNEEPVARAVAASDIPIVAGVGHETDVTIVDFVADVRAPTPTGAAELVSPDRARMLRDVAGCWDALSATLRRQLDRRAQTVDWLARRLRSPQAQMRERRAGLAHLEGRLRFALHGRVQRAEHGQRLLAMRLDAARPDIARERTALQGIEAALARAMRATLDRAQTRLSHHQAGLELLAPQRTLERGYAVLLDAKGQAIRDPAALHARARIEARLARGAVDIEIAQVQPKLPEM</sequence>
<evidence type="ECO:0000255" key="1">
    <source>
        <dbReference type="HAMAP-Rule" id="MF_00378"/>
    </source>
</evidence>
<feature type="chain" id="PRO_0000197869" description="Exodeoxyribonuclease 7 large subunit">
    <location>
        <begin position="1"/>
        <end position="440"/>
    </location>
</feature>
<proteinExistence type="inferred from homology"/>
<organism>
    <name type="scientific">Ralstonia nicotianae (strain ATCC BAA-1114 / GMI1000)</name>
    <name type="common">Ralstonia solanacearum</name>
    <dbReference type="NCBI Taxonomy" id="267608"/>
    <lineage>
        <taxon>Bacteria</taxon>
        <taxon>Pseudomonadati</taxon>
        <taxon>Pseudomonadota</taxon>
        <taxon>Betaproteobacteria</taxon>
        <taxon>Burkholderiales</taxon>
        <taxon>Burkholderiaceae</taxon>
        <taxon>Ralstonia</taxon>
        <taxon>Ralstonia solanacearum species complex</taxon>
    </lineage>
</organism>
<dbReference type="EC" id="3.1.11.6" evidence="1"/>
<dbReference type="EMBL" id="AL646052">
    <property type="protein sequence ID" value="CAD16234.1"/>
    <property type="molecule type" value="Genomic_DNA"/>
</dbReference>
<dbReference type="SMR" id="Q8XWE7"/>
<dbReference type="STRING" id="267608.RSc2527"/>
<dbReference type="EnsemblBacteria" id="CAD16234">
    <property type="protein sequence ID" value="CAD16234"/>
    <property type="gene ID" value="RSc2527"/>
</dbReference>
<dbReference type="KEGG" id="rso:RSc2527"/>
<dbReference type="eggNOG" id="COG1570">
    <property type="taxonomic scope" value="Bacteria"/>
</dbReference>
<dbReference type="HOGENOM" id="CLU_023625_3_1_4"/>
<dbReference type="Proteomes" id="UP000001436">
    <property type="component" value="Chromosome"/>
</dbReference>
<dbReference type="GO" id="GO:0005737">
    <property type="term" value="C:cytoplasm"/>
    <property type="evidence" value="ECO:0007669"/>
    <property type="project" value="UniProtKB-SubCell"/>
</dbReference>
<dbReference type="GO" id="GO:0009318">
    <property type="term" value="C:exodeoxyribonuclease VII complex"/>
    <property type="evidence" value="ECO:0007669"/>
    <property type="project" value="InterPro"/>
</dbReference>
<dbReference type="GO" id="GO:0008855">
    <property type="term" value="F:exodeoxyribonuclease VII activity"/>
    <property type="evidence" value="ECO:0007669"/>
    <property type="project" value="UniProtKB-UniRule"/>
</dbReference>
<dbReference type="GO" id="GO:0003676">
    <property type="term" value="F:nucleic acid binding"/>
    <property type="evidence" value="ECO:0007669"/>
    <property type="project" value="InterPro"/>
</dbReference>
<dbReference type="GO" id="GO:0006308">
    <property type="term" value="P:DNA catabolic process"/>
    <property type="evidence" value="ECO:0007669"/>
    <property type="project" value="UniProtKB-UniRule"/>
</dbReference>
<dbReference type="CDD" id="cd04489">
    <property type="entry name" value="ExoVII_LU_OBF"/>
    <property type="match status" value="1"/>
</dbReference>
<dbReference type="HAMAP" id="MF_00378">
    <property type="entry name" value="Exonuc_7_L"/>
    <property type="match status" value="1"/>
</dbReference>
<dbReference type="InterPro" id="IPR003753">
    <property type="entry name" value="Exonuc_VII_L"/>
</dbReference>
<dbReference type="InterPro" id="IPR020579">
    <property type="entry name" value="Exonuc_VII_lsu_C"/>
</dbReference>
<dbReference type="InterPro" id="IPR025824">
    <property type="entry name" value="OB-fold_nuc-bd_dom"/>
</dbReference>
<dbReference type="NCBIfam" id="TIGR00237">
    <property type="entry name" value="xseA"/>
    <property type="match status" value="1"/>
</dbReference>
<dbReference type="PANTHER" id="PTHR30008">
    <property type="entry name" value="EXODEOXYRIBONUCLEASE 7 LARGE SUBUNIT"/>
    <property type="match status" value="1"/>
</dbReference>
<dbReference type="PANTHER" id="PTHR30008:SF0">
    <property type="entry name" value="EXODEOXYRIBONUCLEASE 7 LARGE SUBUNIT"/>
    <property type="match status" value="1"/>
</dbReference>
<dbReference type="Pfam" id="PF02601">
    <property type="entry name" value="Exonuc_VII_L"/>
    <property type="match status" value="1"/>
</dbReference>
<dbReference type="Pfam" id="PF13742">
    <property type="entry name" value="tRNA_anti_2"/>
    <property type="match status" value="1"/>
</dbReference>
<reference key="1">
    <citation type="journal article" date="2002" name="Nature">
        <title>Genome sequence of the plant pathogen Ralstonia solanacearum.</title>
        <authorList>
            <person name="Salanoubat M."/>
            <person name="Genin S."/>
            <person name="Artiguenave F."/>
            <person name="Gouzy J."/>
            <person name="Mangenot S."/>
            <person name="Arlat M."/>
            <person name="Billault A."/>
            <person name="Brottier P."/>
            <person name="Camus J.-C."/>
            <person name="Cattolico L."/>
            <person name="Chandler M."/>
            <person name="Choisne N."/>
            <person name="Claudel-Renard C."/>
            <person name="Cunnac S."/>
            <person name="Demange N."/>
            <person name="Gaspin C."/>
            <person name="Lavie M."/>
            <person name="Moisan A."/>
            <person name="Robert C."/>
            <person name="Saurin W."/>
            <person name="Schiex T."/>
            <person name="Siguier P."/>
            <person name="Thebault P."/>
            <person name="Whalen M."/>
            <person name="Wincker P."/>
            <person name="Levy M."/>
            <person name="Weissenbach J."/>
            <person name="Boucher C.A."/>
        </authorList>
    </citation>
    <scope>NUCLEOTIDE SEQUENCE [LARGE SCALE GENOMIC DNA]</scope>
    <source>
        <strain>ATCC BAA-1114 / GMI1000</strain>
    </source>
</reference>
<keyword id="KW-0963">Cytoplasm</keyword>
<keyword id="KW-0269">Exonuclease</keyword>
<keyword id="KW-0378">Hydrolase</keyword>
<keyword id="KW-0540">Nuclease</keyword>
<keyword id="KW-1185">Reference proteome</keyword>
<accession>Q8XWE7</accession>
<gene>
    <name evidence="1" type="primary">xseA</name>
    <name type="ordered locus">RSc2527</name>
    <name type="ORF">RS01054</name>
</gene>